<dbReference type="EMBL" id="AE016819">
    <property type="protein sequence ID" value="AAS54076.1"/>
    <property type="molecule type" value="Genomic_DNA"/>
</dbReference>
<dbReference type="RefSeq" id="NP_986252.1">
    <property type="nucleotide sequence ID" value="NM_212388.1"/>
</dbReference>
<dbReference type="SMR" id="Q751X1"/>
<dbReference type="FunCoup" id="Q751X1">
    <property type="interactions" value="276"/>
</dbReference>
<dbReference type="STRING" id="284811.Q751X1"/>
<dbReference type="EnsemblFungi" id="AAS54076">
    <property type="protein sequence ID" value="AAS54076"/>
    <property type="gene ID" value="AGOS_AFR704W"/>
</dbReference>
<dbReference type="GeneID" id="4622541"/>
<dbReference type="KEGG" id="ago:AGOS_AFR704W"/>
<dbReference type="eggNOG" id="KOG4100">
    <property type="taxonomic scope" value="Eukaryota"/>
</dbReference>
<dbReference type="HOGENOM" id="CLU_102310_1_1_1"/>
<dbReference type="InParanoid" id="Q751X1"/>
<dbReference type="OMA" id="WQQTNEN"/>
<dbReference type="OrthoDB" id="278329at2759"/>
<dbReference type="Proteomes" id="UP000000591">
    <property type="component" value="Chromosome VI"/>
</dbReference>
<dbReference type="GO" id="GO:0005758">
    <property type="term" value="C:mitochondrial intermembrane space"/>
    <property type="evidence" value="ECO:0000318"/>
    <property type="project" value="GO_Central"/>
</dbReference>
<dbReference type="GO" id="GO:0005759">
    <property type="term" value="C:mitochondrial matrix"/>
    <property type="evidence" value="ECO:0007669"/>
    <property type="project" value="UniProtKB-SubCell"/>
</dbReference>
<dbReference type="GO" id="GO:0006094">
    <property type="term" value="P:gluconeogenesis"/>
    <property type="evidence" value="ECO:0007669"/>
    <property type="project" value="UniProtKB-KW"/>
</dbReference>
<dbReference type="GO" id="GO:0034553">
    <property type="term" value="P:mitochondrial respiratory chain complex II assembly"/>
    <property type="evidence" value="ECO:0000318"/>
    <property type="project" value="GO_Central"/>
</dbReference>
<dbReference type="GO" id="GO:0006105">
    <property type="term" value="P:succinate metabolic process"/>
    <property type="evidence" value="ECO:0000318"/>
    <property type="project" value="GO_Central"/>
</dbReference>
<dbReference type="CDD" id="cd20270">
    <property type="entry name" value="Complex1_LYR_SDHAF3_LYRM10"/>
    <property type="match status" value="1"/>
</dbReference>
<dbReference type="InterPro" id="IPR008381">
    <property type="entry name" value="SDHAF3/Sdh7"/>
</dbReference>
<dbReference type="PANTHER" id="PTHR13137">
    <property type="entry name" value="DC11 ACN9 HOMOLOG"/>
    <property type="match status" value="1"/>
</dbReference>
<dbReference type="PANTHER" id="PTHR13137:SF6">
    <property type="entry name" value="SUCCINATE DEHYDROGENASE ASSEMBLY FACTOR 3, MITOCHONDRIAL"/>
    <property type="match status" value="1"/>
</dbReference>
<dbReference type="Pfam" id="PF13233">
    <property type="entry name" value="Complex1_LYR_2"/>
    <property type="match status" value="1"/>
</dbReference>
<reference key="1">
    <citation type="journal article" date="2004" name="Science">
        <title>The Ashbya gossypii genome as a tool for mapping the ancient Saccharomyces cerevisiae genome.</title>
        <authorList>
            <person name="Dietrich F.S."/>
            <person name="Voegeli S."/>
            <person name="Brachat S."/>
            <person name="Lerch A."/>
            <person name="Gates K."/>
            <person name="Steiner S."/>
            <person name="Mohr C."/>
            <person name="Poehlmann R."/>
            <person name="Luedi P."/>
            <person name="Choi S."/>
            <person name="Wing R.A."/>
            <person name="Flavier A."/>
            <person name="Gaffney T.D."/>
            <person name="Philippsen P."/>
        </authorList>
    </citation>
    <scope>NUCLEOTIDE SEQUENCE [LARGE SCALE GENOMIC DNA]</scope>
    <source>
        <strain>ATCC 10895 / CBS 109.51 / FGSC 9923 / NRRL Y-1056</strain>
    </source>
</reference>
<reference key="2">
    <citation type="journal article" date="2013" name="G3 (Bethesda)">
        <title>Genomes of Ashbya fungi isolated from insects reveal four mating-type loci, numerous translocations, lack of transposons, and distinct gene duplications.</title>
        <authorList>
            <person name="Dietrich F.S."/>
            <person name="Voegeli S."/>
            <person name="Kuo S."/>
            <person name="Philippsen P."/>
        </authorList>
    </citation>
    <scope>GENOME REANNOTATION</scope>
    <source>
        <strain>ATCC 10895 / CBS 109.51 / FGSC 9923 / NRRL Y-1056</strain>
    </source>
</reference>
<sequence length="125" mass="14335">MRTTNHLYRTVHRQGKPLLPPLHLYRRILRAHRTFPPAQRALGDEYVKSEFKLHKNIDNPVHIIGFLASWQDYFHMISTNSWAEGTLSKSLVDQMSSEQIVQLYELMKETKQLGGASAESGSSLS</sequence>
<name>SDHF3_EREGS</name>
<comment type="function">
    <text evidence="1 2">Plays an essential role in the assembly of succinate dehydrogenase (SDH), an enzyme complex (also referred to as respiratory complex II) that is a component of both the tricarboxylic acid (TCA) cycle and the mitochondrial electron transport chain, and which couples the oxidation of succinate to fumarate with the reduction of ubiquinone (coenzyme Q) to ubiquinol. Promotes maturation of the iron-sulfur protein subunit of the SDH catalytic dimer, protecting it from the deleterious effects of oxidants. May act together with SDHAF1.</text>
</comment>
<comment type="subunit">
    <text evidence="1">Interacts with the iron-sulfur protein subunit within the SDH catalytic dimer.</text>
</comment>
<comment type="subcellular location">
    <subcellularLocation>
        <location evidence="1">Mitochondrion matrix</location>
    </subcellularLocation>
</comment>
<comment type="similarity">
    <text evidence="4">Belongs to the complex I LYR family. SDHAF3 subfamily.</text>
</comment>
<protein>
    <recommendedName>
        <fullName evidence="1">Succinate dehydrogenase assembly factor 3, mitochondrial</fullName>
        <shortName evidence="1">SDH assembly factor 3</shortName>
        <shortName evidence="1">SDHAF3</shortName>
    </recommendedName>
</protein>
<keyword id="KW-0143">Chaperone</keyword>
<keyword id="KW-0312">Gluconeogenesis</keyword>
<keyword id="KW-0496">Mitochondrion</keyword>
<keyword id="KW-1185">Reference proteome</keyword>
<keyword id="KW-0809">Transit peptide</keyword>
<accession>Q751X1</accession>
<feature type="transit peptide" description="Mitochondrion" evidence="3">
    <location>
        <begin position="1"/>
        <end position="42"/>
    </location>
</feature>
<feature type="chain" id="PRO_0000042651" description="Succinate dehydrogenase assembly factor 3, mitochondrial">
    <location>
        <begin position="43"/>
        <end position="125"/>
    </location>
</feature>
<proteinExistence type="inferred from homology"/>
<organism>
    <name type="scientific">Eremothecium gossypii (strain ATCC 10895 / CBS 109.51 / FGSC 9923 / NRRL Y-1056)</name>
    <name type="common">Yeast</name>
    <name type="synonym">Ashbya gossypii</name>
    <dbReference type="NCBI Taxonomy" id="284811"/>
    <lineage>
        <taxon>Eukaryota</taxon>
        <taxon>Fungi</taxon>
        <taxon>Dikarya</taxon>
        <taxon>Ascomycota</taxon>
        <taxon>Saccharomycotina</taxon>
        <taxon>Saccharomycetes</taxon>
        <taxon>Saccharomycetales</taxon>
        <taxon>Saccharomycetaceae</taxon>
        <taxon>Eremothecium</taxon>
    </lineage>
</organism>
<gene>
    <name type="ordered locus">AFR704W</name>
</gene>
<evidence type="ECO:0000250" key="1">
    <source>
        <dbReference type="UniProtKB" id="Q04401"/>
    </source>
</evidence>
<evidence type="ECO:0000250" key="2">
    <source>
        <dbReference type="UniProtKB" id="Q8SZ16"/>
    </source>
</evidence>
<evidence type="ECO:0000255" key="3"/>
<evidence type="ECO:0000305" key="4"/>